<gene>
    <name evidence="1" type="primary">kdsB</name>
    <name type="ordered locus">PSHAa1658</name>
</gene>
<evidence type="ECO:0000255" key="1">
    <source>
        <dbReference type="HAMAP-Rule" id="MF_00057"/>
    </source>
</evidence>
<organism>
    <name type="scientific">Pseudoalteromonas translucida (strain TAC 125)</name>
    <dbReference type="NCBI Taxonomy" id="326442"/>
    <lineage>
        <taxon>Bacteria</taxon>
        <taxon>Pseudomonadati</taxon>
        <taxon>Pseudomonadota</taxon>
        <taxon>Gammaproteobacteria</taxon>
        <taxon>Alteromonadales</taxon>
        <taxon>Pseudoalteromonadaceae</taxon>
        <taxon>Pseudoalteromonas</taxon>
    </lineage>
</organism>
<dbReference type="EC" id="2.7.7.38" evidence="1"/>
<dbReference type="EMBL" id="CR954246">
    <property type="protein sequence ID" value="CAI86731.1"/>
    <property type="molecule type" value="Genomic_DNA"/>
</dbReference>
<dbReference type="SMR" id="Q3IGX8"/>
<dbReference type="STRING" id="326442.PSHAa1658"/>
<dbReference type="KEGG" id="pha:PSHAa1658"/>
<dbReference type="PATRIC" id="fig|326442.8.peg.1603"/>
<dbReference type="eggNOG" id="COG1212">
    <property type="taxonomic scope" value="Bacteria"/>
</dbReference>
<dbReference type="HOGENOM" id="CLU_065038_1_0_6"/>
<dbReference type="BioCyc" id="PHAL326442:PSHA_RS08125-MONOMER"/>
<dbReference type="UniPathway" id="UPA00030"/>
<dbReference type="UniPathway" id="UPA00358">
    <property type="reaction ID" value="UER00476"/>
</dbReference>
<dbReference type="Proteomes" id="UP000006843">
    <property type="component" value="Chromosome I"/>
</dbReference>
<dbReference type="GO" id="GO:0005829">
    <property type="term" value="C:cytosol"/>
    <property type="evidence" value="ECO:0007669"/>
    <property type="project" value="TreeGrafter"/>
</dbReference>
<dbReference type="GO" id="GO:0008690">
    <property type="term" value="F:3-deoxy-manno-octulosonate cytidylyltransferase activity"/>
    <property type="evidence" value="ECO:0007669"/>
    <property type="project" value="UniProtKB-UniRule"/>
</dbReference>
<dbReference type="GO" id="GO:0033468">
    <property type="term" value="P:CMP-keto-3-deoxy-D-manno-octulosonic acid biosynthetic process"/>
    <property type="evidence" value="ECO:0007669"/>
    <property type="project" value="UniProtKB-UniRule"/>
</dbReference>
<dbReference type="GO" id="GO:0009103">
    <property type="term" value="P:lipopolysaccharide biosynthetic process"/>
    <property type="evidence" value="ECO:0007669"/>
    <property type="project" value="UniProtKB-UniRule"/>
</dbReference>
<dbReference type="CDD" id="cd02517">
    <property type="entry name" value="CMP-KDO-Synthetase"/>
    <property type="match status" value="1"/>
</dbReference>
<dbReference type="FunFam" id="3.90.550.10:FF:000011">
    <property type="entry name" value="3-deoxy-manno-octulosonate cytidylyltransferase"/>
    <property type="match status" value="1"/>
</dbReference>
<dbReference type="Gene3D" id="3.90.550.10">
    <property type="entry name" value="Spore Coat Polysaccharide Biosynthesis Protein SpsA, Chain A"/>
    <property type="match status" value="1"/>
</dbReference>
<dbReference type="HAMAP" id="MF_00057">
    <property type="entry name" value="KdsB"/>
    <property type="match status" value="1"/>
</dbReference>
<dbReference type="InterPro" id="IPR003329">
    <property type="entry name" value="Cytidylyl_trans"/>
</dbReference>
<dbReference type="InterPro" id="IPR004528">
    <property type="entry name" value="KdsB"/>
</dbReference>
<dbReference type="InterPro" id="IPR029044">
    <property type="entry name" value="Nucleotide-diphossugar_trans"/>
</dbReference>
<dbReference type="NCBIfam" id="TIGR00466">
    <property type="entry name" value="kdsB"/>
    <property type="match status" value="1"/>
</dbReference>
<dbReference type="NCBIfam" id="NF003950">
    <property type="entry name" value="PRK05450.1-3"/>
    <property type="match status" value="1"/>
</dbReference>
<dbReference type="NCBIfam" id="NF003952">
    <property type="entry name" value="PRK05450.1-5"/>
    <property type="match status" value="1"/>
</dbReference>
<dbReference type="NCBIfam" id="NF009905">
    <property type="entry name" value="PRK13368.1"/>
    <property type="match status" value="1"/>
</dbReference>
<dbReference type="PANTHER" id="PTHR42866">
    <property type="entry name" value="3-DEOXY-MANNO-OCTULOSONATE CYTIDYLYLTRANSFERASE"/>
    <property type="match status" value="1"/>
</dbReference>
<dbReference type="PANTHER" id="PTHR42866:SF2">
    <property type="entry name" value="3-DEOXY-MANNO-OCTULOSONATE CYTIDYLYLTRANSFERASE, MITOCHONDRIAL"/>
    <property type="match status" value="1"/>
</dbReference>
<dbReference type="Pfam" id="PF02348">
    <property type="entry name" value="CTP_transf_3"/>
    <property type="match status" value="1"/>
</dbReference>
<dbReference type="SUPFAM" id="SSF53448">
    <property type="entry name" value="Nucleotide-diphospho-sugar transferases"/>
    <property type="match status" value="1"/>
</dbReference>
<comment type="function">
    <text evidence="1">Activates KDO (a required 8-carbon sugar) for incorporation into bacterial lipopolysaccharide in Gram-negative bacteria.</text>
</comment>
<comment type="catalytic activity">
    <reaction evidence="1">
        <text>3-deoxy-alpha-D-manno-oct-2-ulosonate + CTP = CMP-3-deoxy-beta-D-manno-octulosonate + diphosphate</text>
        <dbReference type="Rhea" id="RHEA:23448"/>
        <dbReference type="ChEBI" id="CHEBI:33019"/>
        <dbReference type="ChEBI" id="CHEBI:37563"/>
        <dbReference type="ChEBI" id="CHEBI:85986"/>
        <dbReference type="ChEBI" id="CHEBI:85987"/>
        <dbReference type="EC" id="2.7.7.38"/>
    </reaction>
</comment>
<comment type="pathway">
    <text evidence="1">Nucleotide-sugar biosynthesis; CMP-3-deoxy-D-manno-octulosonate biosynthesis; CMP-3-deoxy-D-manno-octulosonate from 3-deoxy-D-manno-octulosonate and CTP: step 1/1.</text>
</comment>
<comment type="pathway">
    <text evidence="1">Bacterial outer membrane biogenesis; lipopolysaccharide biosynthesis.</text>
</comment>
<comment type="subcellular location">
    <subcellularLocation>
        <location evidence="1">Cytoplasm</location>
    </subcellularLocation>
</comment>
<comment type="similarity">
    <text evidence="1">Belongs to the KdsB family.</text>
</comment>
<sequence length="253" mass="27946">MEFVVVIPARYASSRLPGKPLADICGKPMIQHVYEKACLSGASKVVIATDHQKVFDAVSTFTSDVLMTREDHQSGTERLAEVVDLLKLDNNTIVVNVQGDEPLLAPENVSQVATLLNESTAPMATLSVAIEEQEDVFNPNAVKVVSDINKNALYFSRASIPFDRSAMMGEQSTLDLTPFQRHVGIYAYRAGFIKQYIELSVSPLEQLESLEQLRVLYHGYNIKIEQAHITPQAGVDTPEDLAKVISYLQSKHA</sequence>
<keyword id="KW-0963">Cytoplasm</keyword>
<keyword id="KW-0448">Lipopolysaccharide biosynthesis</keyword>
<keyword id="KW-0548">Nucleotidyltransferase</keyword>
<keyword id="KW-1185">Reference proteome</keyword>
<keyword id="KW-0808">Transferase</keyword>
<feature type="chain" id="PRO_1000091891" description="3-deoxy-manno-octulosonate cytidylyltransferase">
    <location>
        <begin position="1"/>
        <end position="253"/>
    </location>
</feature>
<reference key="1">
    <citation type="journal article" date="2005" name="Genome Res.">
        <title>Coping with cold: the genome of the versatile marine Antarctica bacterium Pseudoalteromonas haloplanktis TAC125.</title>
        <authorList>
            <person name="Medigue C."/>
            <person name="Krin E."/>
            <person name="Pascal G."/>
            <person name="Barbe V."/>
            <person name="Bernsel A."/>
            <person name="Bertin P.N."/>
            <person name="Cheung F."/>
            <person name="Cruveiller S."/>
            <person name="D'Amico S."/>
            <person name="Duilio A."/>
            <person name="Fang G."/>
            <person name="Feller G."/>
            <person name="Ho C."/>
            <person name="Mangenot S."/>
            <person name="Marino G."/>
            <person name="Nilsson J."/>
            <person name="Parrilli E."/>
            <person name="Rocha E.P.C."/>
            <person name="Rouy Z."/>
            <person name="Sekowska A."/>
            <person name="Tutino M.L."/>
            <person name="Vallenet D."/>
            <person name="von Heijne G."/>
            <person name="Danchin A."/>
        </authorList>
    </citation>
    <scope>NUCLEOTIDE SEQUENCE [LARGE SCALE GENOMIC DNA]</scope>
    <source>
        <strain>TAC 125</strain>
    </source>
</reference>
<protein>
    <recommendedName>
        <fullName evidence="1">3-deoxy-manno-octulosonate cytidylyltransferase</fullName>
        <ecNumber evidence="1">2.7.7.38</ecNumber>
    </recommendedName>
    <alternativeName>
        <fullName evidence="1">CMP-2-keto-3-deoxyoctulosonic acid synthase</fullName>
        <shortName evidence="1">CKS</shortName>
        <shortName evidence="1">CMP-KDO synthase</shortName>
    </alternativeName>
</protein>
<name>KDSB_PSET1</name>
<proteinExistence type="inferred from homology"/>
<accession>Q3IGX8</accession>